<evidence type="ECO:0000255" key="1">
    <source>
        <dbReference type="HAMAP-Rule" id="MF_00222"/>
    </source>
</evidence>
<gene>
    <name evidence="1" type="primary">aroE</name>
    <name type="ordered locus">CKO_04694</name>
</gene>
<comment type="function">
    <text evidence="1">Involved in the biosynthesis of the chorismate, which leads to the biosynthesis of aromatic amino acids. Catalyzes the reversible NADPH linked reduction of 3-dehydroshikimate (DHSA) to yield shikimate (SA).</text>
</comment>
<comment type="catalytic activity">
    <reaction evidence="1">
        <text>shikimate + NADP(+) = 3-dehydroshikimate + NADPH + H(+)</text>
        <dbReference type="Rhea" id="RHEA:17737"/>
        <dbReference type="ChEBI" id="CHEBI:15378"/>
        <dbReference type="ChEBI" id="CHEBI:16630"/>
        <dbReference type="ChEBI" id="CHEBI:36208"/>
        <dbReference type="ChEBI" id="CHEBI:57783"/>
        <dbReference type="ChEBI" id="CHEBI:58349"/>
        <dbReference type="EC" id="1.1.1.25"/>
    </reaction>
</comment>
<comment type="pathway">
    <text evidence="1">Metabolic intermediate biosynthesis; chorismate biosynthesis; chorismate from D-erythrose 4-phosphate and phosphoenolpyruvate: step 4/7.</text>
</comment>
<comment type="subunit">
    <text evidence="1">Homodimer.</text>
</comment>
<comment type="similarity">
    <text evidence="1">Belongs to the shikimate dehydrogenase family.</text>
</comment>
<name>AROE_CITK8</name>
<organism>
    <name type="scientific">Citrobacter koseri (strain ATCC BAA-895 / CDC 4225-83 / SGSC4696)</name>
    <dbReference type="NCBI Taxonomy" id="290338"/>
    <lineage>
        <taxon>Bacteria</taxon>
        <taxon>Pseudomonadati</taxon>
        <taxon>Pseudomonadota</taxon>
        <taxon>Gammaproteobacteria</taxon>
        <taxon>Enterobacterales</taxon>
        <taxon>Enterobacteriaceae</taxon>
        <taxon>Citrobacter</taxon>
    </lineage>
</organism>
<reference key="1">
    <citation type="submission" date="2007-08" db="EMBL/GenBank/DDBJ databases">
        <authorList>
            <consortium name="The Citrobacter koseri Genome Sequencing Project"/>
            <person name="McClelland M."/>
            <person name="Sanderson E.K."/>
            <person name="Porwollik S."/>
            <person name="Spieth J."/>
            <person name="Clifton W.S."/>
            <person name="Latreille P."/>
            <person name="Courtney L."/>
            <person name="Wang C."/>
            <person name="Pepin K."/>
            <person name="Bhonagiri V."/>
            <person name="Nash W."/>
            <person name="Johnson M."/>
            <person name="Thiruvilangam P."/>
            <person name="Wilson R."/>
        </authorList>
    </citation>
    <scope>NUCLEOTIDE SEQUENCE [LARGE SCALE GENOMIC DNA]</scope>
    <source>
        <strain>ATCC BAA-895 / CDC 4225-83 / SGSC4696</strain>
    </source>
</reference>
<protein>
    <recommendedName>
        <fullName evidence="1">Shikimate dehydrogenase (NADP(+))</fullName>
        <shortName evidence="1">SDH</shortName>
        <ecNumber evidence="1">1.1.1.25</ecNumber>
    </recommendedName>
</protein>
<feature type="chain" id="PRO_1000021273" description="Shikimate dehydrogenase (NADP(+))">
    <location>
        <begin position="1"/>
        <end position="272"/>
    </location>
</feature>
<feature type="active site" description="Proton acceptor" evidence="1">
    <location>
        <position position="65"/>
    </location>
</feature>
<feature type="binding site" evidence="1">
    <location>
        <begin position="14"/>
        <end position="16"/>
    </location>
    <ligand>
        <name>shikimate</name>
        <dbReference type="ChEBI" id="CHEBI:36208"/>
    </ligand>
</feature>
<feature type="binding site" evidence="1">
    <location>
        <position position="61"/>
    </location>
    <ligand>
        <name>shikimate</name>
        <dbReference type="ChEBI" id="CHEBI:36208"/>
    </ligand>
</feature>
<feature type="binding site" evidence="1">
    <location>
        <position position="77"/>
    </location>
    <ligand>
        <name>NADP(+)</name>
        <dbReference type="ChEBI" id="CHEBI:58349"/>
    </ligand>
</feature>
<feature type="binding site" evidence="1">
    <location>
        <position position="86"/>
    </location>
    <ligand>
        <name>shikimate</name>
        <dbReference type="ChEBI" id="CHEBI:36208"/>
    </ligand>
</feature>
<feature type="binding site" evidence="1">
    <location>
        <position position="102"/>
    </location>
    <ligand>
        <name>shikimate</name>
        <dbReference type="ChEBI" id="CHEBI:36208"/>
    </ligand>
</feature>
<feature type="binding site" evidence="1">
    <location>
        <begin position="126"/>
        <end position="130"/>
    </location>
    <ligand>
        <name>NADP(+)</name>
        <dbReference type="ChEBI" id="CHEBI:58349"/>
    </ligand>
</feature>
<feature type="binding site" evidence="1">
    <location>
        <begin position="149"/>
        <end position="154"/>
    </location>
    <ligand>
        <name>NADP(+)</name>
        <dbReference type="ChEBI" id="CHEBI:58349"/>
    </ligand>
</feature>
<feature type="binding site" evidence="1">
    <location>
        <position position="213"/>
    </location>
    <ligand>
        <name>NADP(+)</name>
        <dbReference type="ChEBI" id="CHEBI:58349"/>
    </ligand>
</feature>
<feature type="binding site" evidence="1">
    <location>
        <position position="215"/>
    </location>
    <ligand>
        <name>shikimate</name>
        <dbReference type="ChEBI" id="CHEBI:36208"/>
    </ligand>
</feature>
<feature type="binding site" evidence="1">
    <location>
        <position position="237"/>
    </location>
    <ligand>
        <name>NADP(+)</name>
        <dbReference type="ChEBI" id="CHEBI:58349"/>
    </ligand>
</feature>
<accession>A8AQH6</accession>
<sequence>METYAVFGNPIAHSKSPFIHQQFAQQLKIDHPYGRVLAPVDDFVNTLNAFFAQGGKGANVTVPFKEEAFARADELTERAALAGAVNTLKRLDDGRLLGDNTDGIGLLSDLERLSFIRPGLRILLIGAGGASRGVLLPLLSMDCAVTIANRTASRAEELAQIFAHTGSVQALRLDALEGHEFDLIINATSSGISGDIPAIPSSLIHPAVCCYDMFYQKGNTPFLAWCAEQGAKRYADGLGMLVGQAAHAVFLWHGVLPDVEPVIATLKQELLA</sequence>
<keyword id="KW-0028">Amino-acid biosynthesis</keyword>
<keyword id="KW-0057">Aromatic amino acid biosynthesis</keyword>
<keyword id="KW-0521">NADP</keyword>
<keyword id="KW-0560">Oxidoreductase</keyword>
<keyword id="KW-1185">Reference proteome</keyword>
<proteinExistence type="inferred from homology"/>
<dbReference type="EC" id="1.1.1.25" evidence="1"/>
<dbReference type="EMBL" id="CP000822">
    <property type="protein sequence ID" value="ABV15739.1"/>
    <property type="molecule type" value="Genomic_DNA"/>
</dbReference>
<dbReference type="RefSeq" id="WP_012135412.1">
    <property type="nucleotide sequence ID" value="NC_009792.1"/>
</dbReference>
<dbReference type="SMR" id="A8AQH6"/>
<dbReference type="STRING" id="290338.CKO_04694"/>
<dbReference type="GeneID" id="45138220"/>
<dbReference type="KEGG" id="cko:CKO_04694"/>
<dbReference type="HOGENOM" id="CLU_044063_2_1_6"/>
<dbReference type="OrthoDB" id="9776868at2"/>
<dbReference type="UniPathway" id="UPA00053">
    <property type="reaction ID" value="UER00087"/>
</dbReference>
<dbReference type="Proteomes" id="UP000008148">
    <property type="component" value="Chromosome"/>
</dbReference>
<dbReference type="GO" id="GO:0005829">
    <property type="term" value="C:cytosol"/>
    <property type="evidence" value="ECO:0007669"/>
    <property type="project" value="TreeGrafter"/>
</dbReference>
<dbReference type="GO" id="GO:0050661">
    <property type="term" value="F:NADP binding"/>
    <property type="evidence" value="ECO:0007669"/>
    <property type="project" value="InterPro"/>
</dbReference>
<dbReference type="GO" id="GO:0004764">
    <property type="term" value="F:shikimate 3-dehydrogenase (NADP+) activity"/>
    <property type="evidence" value="ECO:0007669"/>
    <property type="project" value="UniProtKB-UniRule"/>
</dbReference>
<dbReference type="GO" id="GO:0008652">
    <property type="term" value="P:amino acid biosynthetic process"/>
    <property type="evidence" value="ECO:0007669"/>
    <property type="project" value="UniProtKB-KW"/>
</dbReference>
<dbReference type="GO" id="GO:0009073">
    <property type="term" value="P:aromatic amino acid family biosynthetic process"/>
    <property type="evidence" value="ECO:0007669"/>
    <property type="project" value="UniProtKB-KW"/>
</dbReference>
<dbReference type="GO" id="GO:0009423">
    <property type="term" value="P:chorismate biosynthetic process"/>
    <property type="evidence" value="ECO:0007669"/>
    <property type="project" value="UniProtKB-UniRule"/>
</dbReference>
<dbReference type="GO" id="GO:0019632">
    <property type="term" value="P:shikimate metabolic process"/>
    <property type="evidence" value="ECO:0007669"/>
    <property type="project" value="InterPro"/>
</dbReference>
<dbReference type="CDD" id="cd01065">
    <property type="entry name" value="NAD_bind_Shikimate_DH"/>
    <property type="match status" value="1"/>
</dbReference>
<dbReference type="FunFam" id="3.40.50.10860:FF:000006">
    <property type="entry name" value="Shikimate dehydrogenase (NADP(+))"/>
    <property type="match status" value="1"/>
</dbReference>
<dbReference type="FunFam" id="3.40.50.720:FF:000104">
    <property type="entry name" value="Shikimate dehydrogenase (NADP(+))"/>
    <property type="match status" value="1"/>
</dbReference>
<dbReference type="Gene3D" id="3.40.50.10860">
    <property type="entry name" value="Leucine Dehydrogenase, chain A, domain 1"/>
    <property type="match status" value="1"/>
</dbReference>
<dbReference type="Gene3D" id="3.40.50.720">
    <property type="entry name" value="NAD(P)-binding Rossmann-like Domain"/>
    <property type="match status" value="1"/>
</dbReference>
<dbReference type="HAMAP" id="MF_00222">
    <property type="entry name" value="Shikimate_DH_AroE"/>
    <property type="match status" value="1"/>
</dbReference>
<dbReference type="InterPro" id="IPR046346">
    <property type="entry name" value="Aminoacid_DH-like_N_sf"/>
</dbReference>
<dbReference type="InterPro" id="IPR036291">
    <property type="entry name" value="NAD(P)-bd_dom_sf"/>
</dbReference>
<dbReference type="InterPro" id="IPR041121">
    <property type="entry name" value="SDH_C"/>
</dbReference>
<dbReference type="InterPro" id="IPR011342">
    <property type="entry name" value="Shikimate_DH"/>
</dbReference>
<dbReference type="InterPro" id="IPR013708">
    <property type="entry name" value="Shikimate_DH-bd_N"/>
</dbReference>
<dbReference type="InterPro" id="IPR022893">
    <property type="entry name" value="Shikimate_DH_fam"/>
</dbReference>
<dbReference type="InterPro" id="IPR006151">
    <property type="entry name" value="Shikm_DH/Glu-tRNA_Rdtase"/>
</dbReference>
<dbReference type="NCBIfam" id="TIGR00507">
    <property type="entry name" value="aroE"/>
    <property type="match status" value="1"/>
</dbReference>
<dbReference type="NCBIfam" id="NF001310">
    <property type="entry name" value="PRK00258.1-2"/>
    <property type="match status" value="1"/>
</dbReference>
<dbReference type="PANTHER" id="PTHR21089:SF1">
    <property type="entry name" value="BIFUNCTIONAL 3-DEHYDROQUINATE DEHYDRATASE_SHIKIMATE DEHYDROGENASE, CHLOROPLASTIC"/>
    <property type="match status" value="1"/>
</dbReference>
<dbReference type="PANTHER" id="PTHR21089">
    <property type="entry name" value="SHIKIMATE DEHYDROGENASE"/>
    <property type="match status" value="1"/>
</dbReference>
<dbReference type="Pfam" id="PF18317">
    <property type="entry name" value="SDH_C"/>
    <property type="match status" value="1"/>
</dbReference>
<dbReference type="Pfam" id="PF01488">
    <property type="entry name" value="Shikimate_DH"/>
    <property type="match status" value="1"/>
</dbReference>
<dbReference type="Pfam" id="PF08501">
    <property type="entry name" value="Shikimate_dh_N"/>
    <property type="match status" value="1"/>
</dbReference>
<dbReference type="SUPFAM" id="SSF53223">
    <property type="entry name" value="Aminoacid dehydrogenase-like, N-terminal domain"/>
    <property type="match status" value="1"/>
</dbReference>
<dbReference type="SUPFAM" id="SSF51735">
    <property type="entry name" value="NAD(P)-binding Rossmann-fold domains"/>
    <property type="match status" value="1"/>
</dbReference>